<name>FMT_HELP2</name>
<reference key="1">
    <citation type="submission" date="2008-10" db="EMBL/GenBank/DDBJ databases">
        <title>The complete genome sequence of Helicobacter pylori strain P12.</title>
        <authorList>
            <person name="Fischer W."/>
            <person name="Windhager L."/>
            <person name="Karnholz A."/>
            <person name="Zeiller M."/>
            <person name="Zimmer R."/>
            <person name="Haas R."/>
        </authorList>
    </citation>
    <scope>NUCLEOTIDE SEQUENCE [LARGE SCALE GENOMIC DNA]</scope>
    <source>
        <strain>P12</strain>
    </source>
</reference>
<gene>
    <name evidence="1" type="primary">fmt</name>
    <name type="ordered locus">HPP12_1107</name>
</gene>
<organism>
    <name type="scientific">Helicobacter pylori (strain P12)</name>
    <dbReference type="NCBI Taxonomy" id="570508"/>
    <lineage>
        <taxon>Bacteria</taxon>
        <taxon>Pseudomonadati</taxon>
        <taxon>Campylobacterota</taxon>
        <taxon>Epsilonproteobacteria</taxon>
        <taxon>Campylobacterales</taxon>
        <taxon>Helicobacteraceae</taxon>
        <taxon>Helicobacter</taxon>
    </lineage>
</organism>
<protein>
    <recommendedName>
        <fullName evidence="1">Methionyl-tRNA formyltransferase</fullName>
        <ecNumber evidence="1">2.1.2.9</ecNumber>
    </recommendedName>
</protein>
<comment type="function">
    <text evidence="1">Attaches a formyl group to the free amino group of methionyl-tRNA(fMet). The formyl group appears to play a dual role in the initiator identity of N-formylmethionyl-tRNA by promoting its recognition by IF2 and preventing the misappropriation of this tRNA by the elongation apparatus.</text>
</comment>
<comment type="catalytic activity">
    <reaction evidence="1">
        <text>L-methionyl-tRNA(fMet) + (6R)-10-formyltetrahydrofolate = N-formyl-L-methionyl-tRNA(fMet) + (6S)-5,6,7,8-tetrahydrofolate + H(+)</text>
        <dbReference type="Rhea" id="RHEA:24380"/>
        <dbReference type="Rhea" id="RHEA-COMP:9952"/>
        <dbReference type="Rhea" id="RHEA-COMP:9953"/>
        <dbReference type="ChEBI" id="CHEBI:15378"/>
        <dbReference type="ChEBI" id="CHEBI:57453"/>
        <dbReference type="ChEBI" id="CHEBI:78530"/>
        <dbReference type="ChEBI" id="CHEBI:78844"/>
        <dbReference type="ChEBI" id="CHEBI:195366"/>
        <dbReference type="EC" id="2.1.2.9"/>
    </reaction>
</comment>
<comment type="similarity">
    <text evidence="1">Belongs to the Fmt family.</text>
</comment>
<sequence length="305" mass="34213">MRIVFMGTPGFAEVILRALVENKNNHIEVVGLFTQRDKPFGRKKELKAPETKTYILENRLNIPIFQPQSLKEPEVQILKDLKPDFIVVVAYGKILPKEILAIAPCINVHASLLPKYRGASPIHEMILNDDKIYGISTMLMDLELDSGDILESASFLREDYLDLDALSLKLAHMGATLLLSTLKNFHSITRKPQDHTQATFCKKITKADGLVGFKDAKNLFLKSLAFKSWPEIFLENNLKLLEVELVENEKSHKEGEILRIDEKGVLVGCLKGSVCIAWLQAVGKKPLKAKDYLNGKRLKVGGILA</sequence>
<feature type="chain" id="PRO_1000098410" description="Methionyl-tRNA formyltransferase">
    <location>
        <begin position="1"/>
        <end position="305"/>
    </location>
</feature>
<feature type="binding site" evidence="1">
    <location>
        <begin position="111"/>
        <end position="114"/>
    </location>
    <ligand>
        <name>(6S)-5,6,7,8-tetrahydrofolate</name>
        <dbReference type="ChEBI" id="CHEBI:57453"/>
    </ligand>
</feature>
<keyword id="KW-0648">Protein biosynthesis</keyword>
<keyword id="KW-0808">Transferase</keyword>
<evidence type="ECO:0000255" key="1">
    <source>
        <dbReference type="HAMAP-Rule" id="MF_00182"/>
    </source>
</evidence>
<proteinExistence type="inferred from homology"/>
<dbReference type="EC" id="2.1.2.9" evidence="1"/>
<dbReference type="EMBL" id="CP001217">
    <property type="protein sequence ID" value="ACJ08259.1"/>
    <property type="molecule type" value="Genomic_DNA"/>
</dbReference>
<dbReference type="SMR" id="B6JMY1"/>
<dbReference type="KEGG" id="hpp:HPP12_1107"/>
<dbReference type="HOGENOM" id="CLU_033347_1_1_7"/>
<dbReference type="Proteomes" id="UP000008198">
    <property type="component" value="Chromosome"/>
</dbReference>
<dbReference type="GO" id="GO:0005829">
    <property type="term" value="C:cytosol"/>
    <property type="evidence" value="ECO:0007669"/>
    <property type="project" value="TreeGrafter"/>
</dbReference>
<dbReference type="GO" id="GO:0004479">
    <property type="term" value="F:methionyl-tRNA formyltransferase activity"/>
    <property type="evidence" value="ECO:0007669"/>
    <property type="project" value="UniProtKB-UniRule"/>
</dbReference>
<dbReference type="CDD" id="cd08646">
    <property type="entry name" value="FMT_core_Met-tRNA-FMT_N"/>
    <property type="match status" value="1"/>
</dbReference>
<dbReference type="CDD" id="cd08704">
    <property type="entry name" value="Met_tRNA_FMT_C"/>
    <property type="match status" value="1"/>
</dbReference>
<dbReference type="FunFam" id="3.40.50.12230:FF:000001">
    <property type="entry name" value="Methionyl-tRNA formyltransferase"/>
    <property type="match status" value="1"/>
</dbReference>
<dbReference type="Gene3D" id="3.40.50.12230">
    <property type="match status" value="1"/>
</dbReference>
<dbReference type="HAMAP" id="MF_00182">
    <property type="entry name" value="Formyl_trans"/>
    <property type="match status" value="1"/>
</dbReference>
<dbReference type="InterPro" id="IPR005794">
    <property type="entry name" value="Fmt"/>
</dbReference>
<dbReference type="InterPro" id="IPR005793">
    <property type="entry name" value="Formyl_trans_C"/>
</dbReference>
<dbReference type="InterPro" id="IPR002376">
    <property type="entry name" value="Formyl_transf_N"/>
</dbReference>
<dbReference type="InterPro" id="IPR036477">
    <property type="entry name" value="Formyl_transf_N_sf"/>
</dbReference>
<dbReference type="InterPro" id="IPR011034">
    <property type="entry name" value="Formyl_transferase-like_C_sf"/>
</dbReference>
<dbReference type="InterPro" id="IPR044135">
    <property type="entry name" value="Met-tRNA-FMT_C"/>
</dbReference>
<dbReference type="InterPro" id="IPR041711">
    <property type="entry name" value="Met-tRNA-FMT_N"/>
</dbReference>
<dbReference type="NCBIfam" id="TIGR00460">
    <property type="entry name" value="fmt"/>
    <property type="match status" value="1"/>
</dbReference>
<dbReference type="PANTHER" id="PTHR11138">
    <property type="entry name" value="METHIONYL-TRNA FORMYLTRANSFERASE"/>
    <property type="match status" value="1"/>
</dbReference>
<dbReference type="PANTHER" id="PTHR11138:SF5">
    <property type="entry name" value="METHIONYL-TRNA FORMYLTRANSFERASE, MITOCHONDRIAL"/>
    <property type="match status" value="1"/>
</dbReference>
<dbReference type="Pfam" id="PF02911">
    <property type="entry name" value="Formyl_trans_C"/>
    <property type="match status" value="1"/>
</dbReference>
<dbReference type="Pfam" id="PF00551">
    <property type="entry name" value="Formyl_trans_N"/>
    <property type="match status" value="1"/>
</dbReference>
<dbReference type="SUPFAM" id="SSF50486">
    <property type="entry name" value="FMT C-terminal domain-like"/>
    <property type="match status" value="1"/>
</dbReference>
<dbReference type="SUPFAM" id="SSF53328">
    <property type="entry name" value="Formyltransferase"/>
    <property type="match status" value="1"/>
</dbReference>
<accession>B6JMY1</accession>